<comment type="function">
    <text>Converts lysophosphatidic acid (LPA) into phosphatidic acid by incorporating acyl moiety at the 2 position.</text>
</comment>
<comment type="catalytic activity">
    <reaction>
        <text>a 1-acyl-sn-glycero-3-phosphate + an acyl-CoA = a 1,2-diacyl-sn-glycero-3-phosphate + CoA</text>
        <dbReference type="Rhea" id="RHEA:19709"/>
        <dbReference type="ChEBI" id="CHEBI:57287"/>
        <dbReference type="ChEBI" id="CHEBI:57970"/>
        <dbReference type="ChEBI" id="CHEBI:58342"/>
        <dbReference type="ChEBI" id="CHEBI:58608"/>
        <dbReference type="EC" id="2.3.1.51"/>
    </reaction>
</comment>
<comment type="pathway">
    <text>Phospholipid metabolism; CDP-diacylglycerol biosynthesis; CDP-diacylglycerol from sn-glycerol 3-phosphate: step 2/3.</text>
</comment>
<comment type="subcellular location">
    <subcellularLocation>
        <location evidence="2">Cell inner membrane</location>
        <topology evidence="2">Peripheral membrane protein</topology>
    </subcellularLocation>
</comment>
<comment type="domain">
    <text evidence="1">The HXXXXD motif is essential for acyltransferase activity and may constitute the binding site for the phosphate moiety of the glycerol-3-phosphate.</text>
</comment>
<comment type="similarity">
    <text evidence="2">Belongs to the 1-acyl-sn-glycerol-3-phosphate acyltransferase family.</text>
</comment>
<evidence type="ECO:0000250" key="1"/>
<evidence type="ECO:0000305" key="2"/>
<protein>
    <recommendedName>
        <fullName>1-acyl-sn-glycerol-3-phosphate acyltransferase</fullName>
        <shortName>1-AGP acyltransferase</shortName>
        <shortName>1-AGPAT</shortName>
        <ecNumber>2.3.1.51</ecNumber>
    </recommendedName>
    <alternativeName>
        <fullName>Lysophosphatidic acid acyltransferase</fullName>
        <shortName>LPAAT</shortName>
    </alternativeName>
</protein>
<name>PLSC_HAEIN</name>
<sequence length="240" mass="27502">MLKLLRIFLVLICCILICVLGTIYSFIRFKNPSNVGIVARWFGRLYPLFGLKVEHRIPQDQKQISRAIYIGNHQNNYDMVTISYMVQPRTVSVGKKSLIWIPFFGILYWVTGNIFLDRENRTKAHNTMSQLARRINEDNLSIWMFPEGTRNRGRGLLPFKTGAFHAAISAGVPIIPVVCSSTHNKINLNRWDNGKVICEIMDPIDVSGYTKDNVRDLAAYCHDLMEKRIAELDEEIAKGN</sequence>
<gene>
    <name type="primary">plsC</name>
    <name type="ordered locus">HI_0734</name>
</gene>
<accession>P44848</accession>
<reference key="1">
    <citation type="journal article" date="1995" name="Science">
        <title>Whole-genome random sequencing and assembly of Haemophilus influenzae Rd.</title>
        <authorList>
            <person name="Fleischmann R.D."/>
            <person name="Adams M.D."/>
            <person name="White O."/>
            <person name="Clayton R.A."/>
            <person name="Kirkness E.F."/>
            <person name="Kerlavage A.R."/>
            <person name="Bult C.J."/>
            <person name="Tomb J.-F."/>
            <person name="Dougherty B.A."/>
            <person name="Merrick J.M."/>
            <person name="McKenney K."/>
            <person name="Sutton G.G."/>
            <person name="FitzHugh W."/>
            <person name="Fields C.A."/>
            <person name="Gocayne J.D."/>
            <person name="Scott J.D."/>
            <person name="Shirley R."/>
            <person name="Liu L.-I."/>
            <person name="Glodek A."/>
            <person name="Kelley J.M."/>
            <person name="Weidman J.F."/>
            <person name="Phillips C.A."/>
            <person name="Spriggs T."/>
            <person name="Hedblom E."/>
            <person name="Cotton M.D."/>
            <person name="Utterback T.R."/>
            <person name="Hanna M.C."/>
            <person name="Nguyen D.T."/>
            <person name="Saudek D.M."/>
            <person name="Brandon R.C."/>
            <person name="Fine L.D."/>
            <person name="Fritchman J.L."/>
            <person name="Fuhrmann J.L."/>
            <person name="Geoghagen N.S.M."/>
            <person name="Gnehm C.L."/>
            <person name="McDonald L.A."/>
            <person name="Small K.V."/>
            <person name="Fraser C.M."/>
            <person name="Smith H.O."/>
            <person name="Venter J.C."/>
        </authorList>
    </citation>
    <scope>NUCLEOTIDE SEQUENCE [LARGE SCALE GENOMIC DNA]</scope>
    <source>
        <strain>ATCC 51907 / DSM 11121 / KW20 / Rd</strain>
    </source>
</reference>
<proteinExistence type="inferred from homology"/>
<organism>
    <name type="scientific">Haemophilus influenzae (strain ATCC 51907 / DSM 11121 / KW20 / Rd)</name>
    <dbReference type="NCBI Taxonomy" id="71421"/>
    <lineage>
        <taxon>Bacteria</taxon>
        <taxon>Pseudomonadati</taxon>
        <taxon>Pseudomonadota</taxon>
        <taxon>Gammaproteobacteria</taxon>
        <taxon>Pasteurellales</taxon>
        <taxon>Pasteurellaceae</taxon>
        <taxon>Haemophilus</taxon>
    </lineage>
</organism>
<keyword id="KW-0012">Acyltransferase</keyword>
<keyword id="KW-0997">Cell inner membrane</keyword>
<keyword id="KW-1003">Cell membrane</keyword>
<keyword id="KW-0444">Lipid biosynthesis</keyword>
<keyword id="KW-0443">Lipid metabolism</keyword>
<keyword id="KW-0472">Membrane</keyword>
<keyword id="KW-0594">Phospholipid biosynthesis</keyword>
<keyword id="KW-1208">Phospholipid metabolism</keyword>
<keyword id="KW-1185">Reference proteome</keyword>
<keyword id="KW-0808">Transferase</keyword>
<feature type="chain" id="PRO_0000208169" description="1-acyl-sn-glycerol-3-phosphate acyltransferase">
    <location>
        <begin position="1"/>
        <end position="240"/>
    </location>
</feature>
<feature type="short sequence motif" description="HXXXXD motif">
    <location>
        <begin position="73"/>
        <end position="78"/>
    </location>
</feature>
<dbReference type="EC" id="2.3.1.51"/>
<dbReference type="EMBL" id="L42023">
    <property type="protein sequence ID" value="AAC22391.1"/>
    <property type="molecule type" value="Genomic_DNA"/>
</dbReference>
<dbReference type="PIR" id="D64089">
    <property type="entry name" value="D64089"/>
</dbReference>
<dbReference type="RefSeq" id="NP_438893.1">
    <property type="nucleotide sequence ID" value="NC_000907.1"/>
</dbReference>
<dbReference type="SMR" id="P44848"/>
<dbReference type="STRING" id="71421.HI_0734"/>
<dbReference type="EnsemblBacteria" id="AAC22391">
    <property type="protein sequence ID" value="AAC22391"/>
    <property type="gene ID" value="HI_0734"/>
</dbReference>
<dbReference type="KEGG" id="hin:HI_0734"/>
<dbReference type="PATRIC" id="fig|71421.8.peg.768"/>
<dbReference type="eggNOG" id="COG0204">
    <property type="taxonomic scope" value="Bacteria"/>
</dbReference>
<dbReference type="HOGENOM" id="CLU_027938_10_3_6"/>
<dbReference type="OrthoDB" id="5290997at2"/>
<dbReference type="PhylomeDB" id="P44848"/>
<dbReference type="BioCyc" id="HINF71421:G1GJ1-772-MONOMER"/>
<dbReference type="UniPathway" id="UPA00557">
    <property type="reaction ID" value="UER00613"/>
</dbReference>
<dbReference type="Proteomes" id="UP000000579">
    <property type="component" value="Chromosome"/>
</dbReference>
<dbReference type="GO" id="GO:0005886">
    <property type="term" value="C:plasma membrane"/>
    <property type="evidence" value="ECO:0000318"/>
    <property type="project" value="GO_Central"/>
</dbReference>
<dbReference type="GO" id="GO:0003841">
    <property type="term" value="F:1-acylglycerol-3-phosphate O-acyltransferase activity"/>
    <property type="evidence" value="ECO:0000318"/>
    <property type="project" value="GO_Central"/>
</dbReference>
<dbReference type="GO" id="GO:0016024">
    <property type="term" value="P:CDP-diacylglycerol biosynthetic process"/>
    <property type="evidence" value="ECO:0007669"/>
    <property type="project" value="UniProtKB-UniPathway"/>
</dbReference>
<dbReference type="GO" id="GO:0006654">
    <property type="term" value="P:phosphatidic acid biosynthetic process"/>
    <property type="evidence" value="ECO:0000318"/>
    <property type="project" value="GO_Central"/>
</dbReference>
<dbReference type="CDD" id="cd07989">
    <property type="entry name" value="LPLAT_AGPAT-like"/>
    <property type="match status" value="1"/>
</dbReference>
<dbReference type="InterPro" id="IPR004552">
    <property type="entry name" value="AGP_acyltrans"/>
</dbReference>
<dbReference type="InterPro" id="IPR002123">
    <property type="entry name" value="Plipid/glycerol_acylTrfase"/>
</dbReference>
<dbReference type="NCBIfam" id="TIGR00530">
    <property type="entry name" value="AGP_acyltrn"/>
    <property type="match status" value="1"/>
</dbReference>
<dbReference type="PANTHER" id="PTHR10434">
    <property type="entry name" value="1-ACYL-SN-GLYCEROL-3-PHOSPHATE ACYLTRANSFERASE"/>
    <property type="match status" value="1"/>
</dbReference>
<dbReference type="PANTHER" id="PTHR10434:SF11">
    <property type="entry name" value="1-ACYL-SN-GLYCEROL-3-PHOSPHATE ACYLTRANSFERASE"/>
    <property type="match status" value="1"/>
</dbReference>
<dbReference type="Pfam" id="PF01553">
    <property type="entry name" value="Acyltransferase"/>
    <property type="match status" value="1"/>
</dbReference>
<dbReference type="SMART" id="SM00563">
    <property type="entry name" value="PlsC"/>
    <property type="match status" value="1"/>
</dbReference>
<dbReference type="SUPFAM" id="SSF69593">
    <property type="entry name" value="Glycerol-3-phosphate (1)-acyltransferase"/>
    <property type="match status" value="1"/>
</dbReference>